<sequence>MLQSIIKNIWIPMKPYYTKVYQEIWIGMGLMGFIVYKIRAADKRSKALKASAPAPGHH</sequence>
<reference key="1">
    <citation type="journal article" date="1998" name="Proc. Natl. Acad. Sci. U.S.A.">
        <title>Identification of genes expressed in human CD34(+) hematopoietic stem/progenitor cells by expressed sequence tags and efficient full-length cDNA cloning.</title>
        <authorList>
            <person name="Mao M."/>
            <person name="Fu G."/>
            <person name="Wu J.-S."/>
            <person name="Zhang Q.-H."/>
            <person name="Zhou J."/>
            <person name="Kan L.-X."/>
            <person name="Huang Q.-H."/>
            <person name="He K.-L."/>
            <person name="Gu B.-W."/>
            <person name="Han Z.-G."/>
            <person name="Shen Y."/>
            <person name="Gu J."/>
            <person name="Yu Y.-P."/>
            <person name="Xu S.-H."/>
            <person name="Wang Y.-X."/>
            <person name="Chen S.-J."/>
            <person name="Chen Z."/>
        </authorList>
    </citation>
    <scope>NUCLEOTIDE SEQUENCE [LARGE SCALE MRNA] (ISOFORM 1)</scope>
    <source>
        <tissue>Umbilical cord blood</tissue>
    </source>
</reference>
<reference key="2">
    <citation type="submission" date="1998-12" db="EMBL/GenBank/DDBJ databases">
        <title>Functional prediction of the coding sequences of 121 new genes deduced by analysis of cDNA clones from human fetal liver.</title>
        <authorList>
            <person name="Zhang C."/>
            <person name="Yu Y."/>
            <person name="Zhang S."/>
            <person name="Wei H."/>
            <person name="Zhou G."/>
            <person name="Ouyang S."/>
            <person name="Luo L."/>
            <person name="Bi J."/>
            <person name="Liu M."/>
            <person name="He F."/>
        </authorList>
    </citation>
    <scope>NUCLEOTIDE SEQUENCE [LARGE SCALE MRNA] (ISOFORM 1)</scope>
    <source>
        <tissue>Fetal liver</tissue>
    </source>
</reference>
<reference key="3">
    <citation type="submission" date="2003-01" db="EMBL/GenBank/DDBJ databases">
        <title>Full-length cDNA libraries and normalization.</title>
        <authorList>
            <person name="Li W.B."/>
            <person name="Gruber C."/>
            <person name="Jessee J."/>
            <person name="Polayes D."/>
        </authorList>
    </citation>
    <scope>NUCLEOTIDE SEQUENCE [LARGE SCALE MRNA] (ISOFORM 2)</scope>
    <source>
        <tissue>Neuroblastoma</tissue>
    </source>
</reference>
<reference key="4">
    <citation type="journal article" date="2004" name="Nat. Genet.">
        <title>Complete sequencing and characterization of 21,243 full-length human cDNAs.</title>
        <authorList>
            <person name="Ota T."/>
            <person name="Suzuki Y."/>
            <person name="Nishikawa T."/>
            <person name="Otsuki T."/>
            <person name="Sugiyama T."/>
            <person name="Irie R."/>
            <person name="Wakamatsu A."/>
            <person name="Hayashi K."/>
            <person name="Sato H."/>
            <person name="Nagai K."/>
            <person name="Kimura K."/>
            <person name="Makita H."/>
            <person name="Sekine M."/>
            <person name="Obayashi M."/>
            <person name="Nishi T."/>
            <person name="Shibahara T."/>
            <person name="Tanaka T."/>
            <person name="Ishii S."/>
            <person name="Yamamoto J."/>
            <person name="Saito K."/>
            <person name="Kawai Y."/>
            <person name="Isono Y."/>
            <person name="Nakamura Y."/>
            <person name="Nagahari K."/>
            <person name="Murakami K."/>
            <person name="Yasuda T."/>
            <person name="Iwayanagi T."/>
            <person name="Wagatsuma M."/>
            <person name="Shiratori A."/>
            <person name="Sudo H."/>
            <person name="Hosoiri T."/>
            <person name="Kaku Y."/>
            <person name="Kodaira H."/>
            <person name="Kondo H."/>
            <person name="Sugawara M."/>
            <person name="Takahashi M."/>
            <person name="Kanda K."/>
            <person name="Yokoi T."/>
            <person name="Furuya T."/>
            <person name="Kikkawa E."/>
            <person name="Omura Y."/>
            <person name="Abe K."/>
            <person name="Kamihara K."/>
            <person name="Katsuta N."/>
            <person name="Sato K."/>
            <person name="Tanikawa M."/>
            <person name="Yamazaki M."/>
            <person name="Ninomiya K."/>
            <person name="Ishibashi T."/>
            <person name="Yamashita H."/>
            <person name="Murakawa K."/>
            <person name="Fujimori K."/>
            <person name="Tanai H."/>
            <person name="Kimata M."/>
            <person name="Watanabe M."/>
            <person name="Hiraoka S."/>
            <person name="Chiba Y."/>
            <person name="Ishida S."/>
            <person name="Ono Y."/>
            <person name="Takiguchi S."/>
            <person name="Watanabe S."/>
            <person name="Yosida M."/>
            <person name="Hotuta T."/>
            <person name="Kusano J."/>
            <person name="Kanehori K."/>
            <person name="Takahashi-Fujii A."/>
            <person name="Hara H."/>
            <person name="Tanase T.-O."/>
            <person name="Nomura Y."/>
            <person name="Togiya S."/>
            <person name="Komai F."/>
            <person name="Hara R."/>
            <person name="Takeuchi K."/>
            <person name="Arita M."/>
            <person name="Imose N."/>
            <person name="Musashino K."/>
            <person name="Yuuki H."/>
            <person name="Oshima A."/>
            <person name="Sasaki N."/>
            <person name="Aotsuka S."/>
            <person name="Yoshikawa Y."/>
            <person name="Matsunawa H."/>
            <person name="Ichihara T."/>
            <person name="Shiohata N."/>
            <person name="Sano S."/>
            <person name="Moriya S."/>
            <person name="Momiyama H."/>
            <person name="Satoh N."/>
            <person name="Takami S."/>
            <person name="Terashima Y."/>
            <person name="Suzuki O."/>
            <person name="Nakagawa S."/>
            <person name="Senoh A."/>
            <person name="Mizoguchi H."/>
            <person name="Goto Y."/>
            <person name="Shimizu F."/>
            <person name="Wakebe H."/>
            <person name="Hishigaki H."/>
            <person name="Watanabe T."/>
            <person name="Sugiyama A."/>
            <person name="Takemoto M."/>
            <person name="Kawakami B."/>
            <person name="Yamazaki M."/>
            <person name="Watanabe K."/>
            <person name="Kumagai A."/>
            <person name="Itakura S."/>
            <person name="Fukuzumi Y."/>
            <person name="Fujimori Y."/>
            <person name="Komiyama M."/>
            <person name="Tashiro H."/>
            <person name="Tanigami A."/>
            <person name="Fujiwara T."/>
            <person name="Ono T."/>
            <person name="Yamada K."/>
            <person name="Fujii Y."/>
            <person name="Ozaki K."/>
            <person name="Hirao M."/>
            <person name="Ohmori Y."/>
            <person name="Kawabata A."/>
            <person name="Hikiji T."/>
            <person name="Kobatake N."/>
            <person name="Inagaki H."/>
            <person name="Ikema Y."/>
            <person name="Okamoto S."/>
            <person name="Okitani R."/>
            <person name="Kawakami T."/>
            <person name="Noguchi S."/>
            <person name="Itoh T."/>
            <person name="Shigeta K."/>
            <person name="Senba T."/>
            <person name="Matsumura K."/>
            <person name="Nakajima Y."/>
            <person name="Mizuno T."/>
            <person name="Morinaga M."/>
            <person name="Sasaki M."/>
            <person name="Togashi T."/>
            <person name="Oyama M."/>
            <person name="Hata H."/>
            <person name="Watanabe M."/>
            <person name="Komatsu T."/>
            <person name="Mizushima-Sugano J."/>
            <person name="Satoh T."/>
            <person name="Shirai Y."/>
            <person name="Takahashi Y."/>
            <person name="Nakagawa K."/>
            <person name="Okumura K."/>
            <person name="Nagase T."/>
            <person name="Nomura N."/>
            <person name="Kikuchi H."/>
            <person name="Masuho Y."/>
            <person name="Yamashita R."/>
            <person name="Nakai K."/>
            <person name="Yada T."/>
            <person name="Nakamura Y."/>
            <person name="Ohara O."/>
            <person name="Isogai T."/>
            <person name="Sugano S."/>
        </authorList>
    </citation>
    <scope>NUCLEOTIDE SEQUENCE [LARGE SCALE MRNA] (ISOFORM 1)</scope>
    <source>
        <tissue>Synovium</tissue>
    </source>
</reference>
<reference key="5">
    <citation type="journal article" date="2003" name="Nature">
        <title>The DNA sequence and analysis of human chromosome 14.</title>
        <authorList>
            <person name="Heilig R."/>
            <person name="Eckenberg R."/>
            <person name="Petit J.-L."/>
            <person name="Fonknechten N."/>
            <person name="Da Silva C."/>
            <person name="Cattolico L."/>
            <person name="Levy M."/>
            <person name="Barbe V."/>
            <person name="De Berardinis V."/>
            <person name="Ureta-Vidal A."/>
            <person name="Pelletier E."/>
            <person name="Vico V."/>
            <person name="Anthouard V."/>
            <person name="Rowen L."/>
            <person name="Madan A."/>
            <person name="Qin S."/>
            <person name="Sun H."/>
            <person name="Du H."/>
            <person name="Pepin K."/>
            <person name="Artiguenave F."/>
            <person name="Robert C."/>
            <person name="Cruaud C."/>
            <person name="Bruels T."/>
            <person name="Jaillon O."/>
            <person name="Friedlander L."/>
            <person name="Samson G."/>
            <person name="Brottier P."/>
            <person name="Cure S."/>
            <person name="Segurens B."/>
            <person name="Aniere F."/>
            <person name="Samain S."/>
            <person name="Crespeau H."/>
            <person name="Abbasi N."/>
            <person name="Aiach N."/>
            <person name="Boscus D."/>
            <person name="Dickhoff R."/>
            <person name="Dors M."/>
            <person name="Dubois I."/>
            <person name="Friedman C."/>
            <person name="Gouyvenoux M."/>
            <person name="James R."/>
            <person name="Madan A."/>
            <person name="Mairey-Estrada B."/>
            <person name="Mangenot S."/>
            <person name="Martins N."/>
            <person name="Menard M."/>
            <person name="Oztas S."/>
            <person name="Ratcliffe A."/>
            <person name="Shaffer T."/>
            <person name="Trask B."/>
            <person name="Vacherie B."/>
            <person name="Bellemere C."/>
            <person name="Belser C."/>
            <person name="Besnard-Gonnet M."/>
            <person name="Bartol-Mavel D."/>
            <person name="Boutard M."/>
            <person name="Briez-Silla S."/>
            <person name="Combette S."/>
            <person name="Dufosse-Laurent V."/>
            <person name="Ferron C."/>
            <person name="Lechaplais C."/>
            <person name="Louesse C."/>
            <person name="Muselet D."/>
            <person name="Magdelenat G."/>
            <person name="Pateau E."/>
            <person name="Petit E."/>
            <person name="Sirvain-Trukniewicz P."/>
            <person name="Trybou A."/>
            <person name="Vega-Czarny N."/>
            <person name="Bataille E."/>
            <person name="Bluet E."/>
            <person name="Bordelais I."/>
            <person name="Dubois M."/>
            <person name="Dumont C."/>
            <person name="Guerin T."/>
            <person name="Haffray S."/>
            <person name="Hammadi R."/>
            <person name="Muanga J."/>
            <person name="Pellouin V."/>
            <person name="Robert D."/>
            <person name="Wunderle E."/>
            <person name="Gauguet G."/>
            <person name="Roy A."/>
            <person name="Sainte-Marthe L."/>
            <person name="Verdier J."/>
            <person name="Verdier-Discala C."/>
            <person name="Hillier L.W."/>
            <person name="Fulton L."/>
            <person name="McPherson J."/>
            <person name="Matsuda F."/>
            <person name="Wilson R."/>
            <person name="Scarpelli C."/>
            <person name="Gyapay G."/>
            <person name="Wincker P."/>
            <person name="Saurin W."/>
            <person name="Quetier F."/>
            <person name="Waterston R."/>
            <person name="Hood L."/>
            <person name="Weissenbach J."/>
        </authorList>
    </citation>
    <scope>NUCLEOTIDE SEQUENCE [LARGE SCALE GENOMIC DNA]</scope>
</reference>
<reference key="6">
    <citation type="submission" date="2005-07" db="EMBL/GenBank/DDBJ databases">
        <authorList>
            <person name="Mural R.J."/>
            <person name="Istrail S."/>
            <person name="Sutton G.G."/>
            <person name="Florea L."/>
            <person name="Halpern A.L."/>
            <person name="Mobarry C.M."/>
            <person name="Lippert R."/>
            <person name="Walenz B."/>
            <person name="Shatkay H."/>
            <person name="Dew I."/>
            <person name="Miller J.R."/>
            <person name="Flanigan M.J."/>
            <person name="Edwards N.J."/>
            <person name="Bolanos R."/>
            <person name="Fasulo D."/>
            <person name="Halldorsson B.V."/>
            <person name="Hannenhalli S."/>
            <person name="Turner R."/>
            <person name="Yooseph S."/>
            <person name="Lu F."/>
            <person name="Nusskern D.R."/>
            <person name="Shue B.C."/>
            <person name="Zheng X.H."/>
            <person name="Zhong F."/>
            <person name="Delcher A.L."/>
            <person name="Huson D.H."/>
            <person name="Kravitz S.A."/>
            <person name="Mouchard L."/>
            <person name="Reinert K."/>
            <person name="Remington K.A."/>
            <person name="Clark A.G."/>
            <person name="Waterman M.S."/>
            <person name="Eichler E.E."/>
            <person name="Adams M.D."/>
            <person name="Hunkapiller M.W."/>
            <person name="Myers E.W."/>
            <person name="Venter J.C."/>
        </authorList>
    </citation>
    <scope>NUCLEOTIDE SEQUENCE [LARGE SCALE GENOMIC DNA]</scope>
</reference>
<reference key="7">
    <citation type="journal article" date="2004" name="Genome Res.">
        <title>The status, quality, and expansion of the NIH full-length cDNA project: the Mammalian Gene Collection (MGC).</title>
        <authorList>
            <consortium name="The MGC Project Team"/>
        </authorList>
    </citation>
    <scope>NUCLEOTIDE SEQUENCE [LARGE SCALE MRNA] (ISOFORM 1)</scope>
    <source>
        <tissue>Lung</tissue>
    </source>
</reference>
<reference key="8">
    <citation type="journal article" date="2011" name="BMC Syst. Biol.">
        <title>Initial characterization of the human central proteome.</title>
        <authorList>
            <person name="Burkard T.R."/>
            <person name="Planyavsky M."/>
            <person name="Kaupe I."/>
            <person name="Breitwieser F.P."/>
            <person name="Buerckstuemmer T."/>
            <person name="Bennett K.L."/>
            <person name="Superti-Furga G."/>
            <person name="Colinge J."/>
        </authorList>
    </citation>
    <scope>IDENTIFICATION BY MASS SPECTROMETRY [LARGE SCALE ANALYSIS]</scope>
</reference>
<reference key="9">
    <citation type="journal article" date="2015" name="Proteomics">
        <title>N-terminome analysis of the human mitochondrial proteome.</title>
        <authorList>
            <person name="Vaca Jacome A.S."/>
            <person name="Rabilloud T."/>
            <person name="Schaeffer-Reiss C."/>
            <person name="Rompais M."/>
            <person name="Ayoub D."/>
            <person name="Lane L."/>
            <person name="Bairoch A."/>
            <person name="Van Dorsselaer A."/>
            <person name="Carapito C."/>
        </authorList>
    </citation>
    <scope>IDENTIFICATION BY MASS SPECTROMETRY [LARGE SCALE ANALYSIS]</scope>
</reference>
<reference key="10">
    <citation type="journal article" date="2014" name="Genes Cells">
        <title>Population of ATP synthase molecules in mitochondria is limited by available 6.8-kDa proteolipid protein (MLQ).</title>
        <authorList>
            <person name="Fujikawa M."/>
            <person name="Ohsakaya S."/>
            <person name="Sugawara K."/>
            <person name="Yoshida M."/>
        </authorList>
    </citation>
    <scope>FUNCTION</scope>
    <scope>SUBCELLULAR LOCATION</scope>
</reference>
<reference evidence="10 11 12 13 14 15 16 17" key="11">
    <citation type="journal article" date="2023" name="Mol. Cell">
        <title>Structure of the human ATP synthase.</title>
        <authorList>
            <person name="Lai Y."/>
            <person name="Zhang Y."/>
            <person name="Zhou S."/>
            <person name="Xu J."/>
            <person name="Du Z."/>
            <person name="Feng Z."/>
            <person name="Yu L."/>
            <person name="Zhao Z."/>
            <person name="Wang W."/>
            <person name="Tang Y."/>
            <person name="Yang X."/>
            <person name="Guddat L.W."/>
            <person name="Liu F."/>
            <person name="Gao Y."/>
            <person name="Rao Z."/>
            <person name="Gong H."/>
        </authorList>
    </citation>
    <scope>STRUCTURE BY ELECTRON MICROSCOPY (2.53 ANGSTROMS)</scope>
    <scope>IDENTIFICATION IN THE ATP SYNTHASE COMPLEX</scope>
    <scope>FUNCTION</scope>
    <scope>SUBUNIT</scope>
</reference>
<organism>
    <name type="scientific">Homo sapiens</name>
    <name type="common">Human</name>
    <dbReference type="NCBI Taxonomy" id="9606"/>
    <lineage>
        <taxon>Eukaryota</taxon>
        <taxon>Metazoa</taxon>
        <taxon>Chordata</taxon>
        <taxon>Craniata</taxon>
        <taxon>Vertebrata</taxon>
        <taxon>Euteleostomi</taxon>
        <taxon>Mammalia</taxon>
        <taxon>Eutheria</taxon>
        <taxon>Euarchontoglires</taxon>
        <taxon>Primates</taxon>
        <taxon>Haplorrhini</taxon>
        <taxon>Catarrhini</taxon>
        <taxon>Hominidae</taxon>
        <taxon>Homo</taxon>
    </lineage>
</organism>
<comment type="function">
    <text evidence="1 3 4 8">Subunit j, of the mitochondrial membrane ATP synthase complex (F(1)F(0) ATP synthase or Complex V) that produces ATP from ADP in the presence of a proton gradient across the membrane which is generated by electron transport complexes of the respiratory chain (PubMed:37244256). ATP synthase complex consist of a soluble F(1) head domain - the catalytic core - and a membrane F(1) domain - the membrane proton channel (PubMed:37244256). These two domains are linked by a central stalk rotating inside the F(1) region and a stationary peripheral stalk (PubMed:37244256). During catalysis, ATP synthesis in the catalytic domain of F(1) is coupled via a rotary mechanism of the central stalk subunits to proton translocation (Probable). In vivo, can only synthesize ATP although its ATP hydrolase activity can be activated artificially in vitro (By similarity). Part of the complex F(0) domain (PubMed:37244256). Minor subunit required to maintain the ATP synthase population in the mitochondria (PubMed:24330338).</text>
</comment>
<comment type="subunit">
    <text evidence="4">Component of the ATP synthase complex composed at least of ATP5F1A/subunit alpha, ATP5F1B/subunit beta, ATP5MC1/subunit c (homooctomer), MT-ATP6/subunit a, MT-ATP8/subunit 8, ATP5ME/subunit e, ATP5MF/subunit f, ATP5MG/subunit g, ATP5MK/subunit k, ATP5MJ/subunit j, ATP5F1C/subunit gamma, ATP5F1D/subunit delta, ATP5F1E/subunit epsilon, ATP5PF/subunit F6, ATP5PB/subunit b, ATP5PD/subunit d, ATP5PO/subunit OSCP (PubMed:37244256). ATP synthase complex consists of a soluble F(1) head domain (subunits alpha(3) and beta(3)) - the catalytic core - and a membrane F(0) domain - the membrane proton channel (subunits c, a, 8, e, f, g, k and j) (PubMed:37244256). These two domains are linked by a central stalk (subunits gamma, delta, and epsilon) rotating inside the F1 region and a stationary peripheral stalk (subunits F6, b, d, and OSCP) (PubMed:37244256).</text>
</comment>
<comment type="interaction">
    <interactant intactId="EBI-17870477">
        <id>P56378-2</id>
    </interactant>
    <interactant intactId="EBI-1220105">
        <id>P02654</id>
        <label>APOC1</label>
    </interactant>
    <organismsDiffer>false</organismsDiffer>
    <experiments>3</experiments>
</comment>
<comment type="interaction">
    <interactant intactId="EBI-17870477">
        <id>P56378-2</id>
    </interactant>
    <interactant intactId="EBI-7062247">
        <id>Q9UHD4</id>
        <label>CIDEB</label>
    </interactant>
    <organismsDiffer>false</organismsDiffer>
    <experiments>3</experiments>
</comment>
<comment type="interaction">
    <interactant intactId="EBI-17870477">
        <id>P56378-2</id>
    </interactant>
    <interactant intactId="EBI-6164522">
        <id>Q9Y6C9</id>
        <label>MTCH2</label>
    </interactant>
    <organismsDiffer>false</organismsDiffer>
    <experiments>3</experiments>
</comment>
<comment type="subcellular location">
    <subcellularLocation>
        <location evidence="3">Mitochondrion membrane</location>
        <topology evidence="2">Single-pass membrane protein</topology>
    </subcellularLocation>
</comment>
<comment type="alternative products">
    <event type="alternative splicing"/>
    <isoform>
        <id>P56378-1</id>
        <name>1</name>
        <sequence type="displayed"/>
    </isoform>
    <isoform>
        <id>P56378-2</id>
        <name>2</name>
        <sequence type="described" ref="VSP_047043"/>
    </isoform>
</comment>
<comment type="similarity">
    <text evidence="7">Belongs to the small mitochondrial proteolipid family.</text>
</comment>
<comment type="sequence caution" evidence="7">
    <conflict type="erroneous gene model prediction">
        <sequence resource="EMBL-CDS" id="EAW81849"/>
    </conflict>
</comment>
<accession>P56378</accession>
<accession>B2R588</accession>
<accession>G3V5Q3</accession>
<accession>Q86TT7</accession>
<evidence type="ECO:0000250" key="1">
    <source>
        <dbReference type="UniProtKB" id="P19483"/>
    </source>
</evidence>
<evidence type="ECO:0000255" key="2"/>
<evidence type="ECO:0000269" key="3">
    <source>
    </source>
</evidence>
<evidence type="ECO:0000269" key="4">
    <source>
    </source>
</evidence>
<evidence type="ECO:0000303" key="5">
    <source>
    </source>
</evidence>
<evidence type="ECO:0000303" key="6">
    <source ref="3"/>
</evidence>
<evidence type="ECO:0000305" key="7"/>
<evidence type="ECO:0000305" key="8">
    <source>
    </source>
</evidence>
<evidence type="ECO:0000312" key="9">
    <source>
        <dbReference type="HGNC" id="HGNC:1188"/>
    </source>
</evidence>
<evidence type="ECO:0007744" key="10">
    <source>
        <dbReference type="PDB" id="8H9F"/>
    </source>
</evidence>
<evidence type="ECO:0007744" key="11">
    <source>
        <dbReference type="PDB" id="8H9J"/>
    </source>
</evidence>
<evidence type="ECO:0007744" key="12">
    <source>
        <dbReference type="PDB" id="8H9M"/>
    </source>
</evidence>
<evidence type="ECO:0007744" key="13">
    <source>
        <dbReference type="PDB" id="8H9Q"/>
    </source>
</evidence>
<evidence type="ECO:0007744" key="14">
    <source>
        <dbReference type="PDB" id="8H9S"/>
    </source>
</evidence>
<evidence type="ECO:0007744" key="15">
    <source>
        <dbReference type="PDB" id="8H9T"/>
    </source>
</evidence>
<evidence type="ECO:0007744" key="16">
    <source>
        <dbReference type="PDB" id="8H9U"/>
    </source>
</evidence>
<evidence type="ECO:0007744" key="17">
    <source>
        <dbReference type="PDB" id="8H9V"/>
    </source>
</evidence>
<evidence type="ECO:0007829" key="18">
    <source>
        <dbReference type="PDB" id="8H9M"/>
    </source>
</evidence>
<evidence type="ECO:0007829" key="19">
    <source>
        <dbReference type="PDB" id="8H9V"/>
    </source>
</evidence>
<evidence type="ECO:0007829" key="20">
    <source>
        <dbReference type="PDB" id="8KHF"/>
    </source>
</evidence>
<name>ATP68_HUMAN</name>
<gene>
    <name evidence="9" type="primary">ATP5MJ</name>
    <name type="synonym">ATP5MPL</name>
    <name type="synonym">C14orf2</name>
    <name type="synonym">MP68</name>
    <name type="ORF">PRO1574</name>
</gene>
<proteinExistence type="evidence at protein level"/>
<protein>
    <recommendedName>
        <fullName evidence="7">ATP synthase F(0) complex subunit j, mitochondrial</fullName>
    </recommendedName>
    <alternativeName>
        <fullName evidence="5">6.8 kDa mitochondrial proteolipid protein</fullName>
        <shortName evidence="5">MLQ</shortName>
    </alternativeName>
    <alternativeName>
        <fullName evidence="9">ATP synthase membrane subunit 6.8PL</fullName>
    </alternativeName>
</protein>
<feature type="chain" id="PRO_0000064393" description="ATP synthase F(0) complex subunit j, mitochondrial">
    <location>
        <begin position="1"/>
        <end position="58"/>
    </location>
</feature>
<feature type="transmembrane region" description="Helical" evidence="4 17">
    <location>
        <begin position="22"/>
        <end position="39"/>
    </location>
</feature>
<feature type="splice variant" id="VSP_047043" description="In isoform 2." evidence="6">
    <original>M</original>
    <variation>MKLYGTRGSDISHFQCQM</variation>
    <location>
        <position position="1"/>
    </location>
</feature>
<feature type="sequence variant" id="VAR_014526" description="In dbSNP:rs1053419.">
    <original>I</original>
    <variation>V</variation>
    <location>
        <position position="9"/>
    </location>
</feature>
<feature type="turn" evidence="20">
    <location>
        <begin position="3"/>
        <end position="5"/>
    </location>
</feature>
<feature type="turn" evidence="18">
    <location>
        <begin position="6"/>
        <end position="13"/>
    </location>
</feature>
<feature type="helix" evidence="18">
    <location>
        <begin position="14"/>
        <end position="18"/>
    </location>
</feature>
<feature type="turn" evidence="19">
    <location>
        <begin position="19"/>
        <end position="21"/>
    </location>
</feature>
<feature type="helix" evidence="18">
    <location>
        <begin position="22"/>
        <end position="40"/>
    </location>
</feature>
<dbReference type="EMBL" id="AF054175">
    <property type="protein sequence ID" value="AAC39909.1"/>
    <property type="molecule type" value="mRNA"/>
</dbReference>
<dbReference type="EMBL" id="AF116639">
    <property type="protein sequence ID" value="AAF71062.1"/>
    <property type="molecule type" value="mRNA"/>
</dbReference>
<dbReference type="EMBL" id="BX161388">
    <property type="protein sequence ID" value="CAD61878.1"/>
    <property type="molecule type" value="mRNA"/>
</dbReference>
<dbReference type="EMBL" id="AK312099">
    <property type="protein sequence ID" value="BAG35035.1"/>
    <property type="molecule type" value="mRNA"/>
</dbReference>
<dbReference type="EMBL" id="AL132712">
    <property type="status" value="NOT_ANNOTATED_CDS"/>
    <property type="molecule type" value="Genomic_DNA"/>
</dbReference>
<dbReference type="EMBL" id="CH471061">
    <property type="protein sequence ID" value="EAW81849.1"/>
    <property type="status" value="ALT_SEQ"/>
    <property type="molecule type" value="Genomic_DNA"/>
</dbReference>
<dbReference type="EMBL" id="CH471061">
    <property type="protein sequence ID" value="EAW81850.1"/>
    <property type="molecule type" value="Genomic_DNA"/>
</dbReference>
<dbReference type="EMBL" id="BC000429">
    <property type="protein sequence ID" value="AAH00429.1"/>
    <property type="molecule type" value="mRNA"/>
</dbReference>
<dbReference type="EMBL" id="BC001944">
    <property type="protein sequence ID" value="AAH01944.1"/>
    <property type="molecule type" value="mRNA"/>
</dbReference>
<dbReference type="CCDS" id="CCDS45169.1">
    <molecule id="P56378-2"/>
</dbReference>
<dbReference type="CCDS" id="CCDS9986.1">
    <molecule id="P56378-1"/>
</dbReference>
<dbReference type="RefSeq" id="NP_001120865.1">
    <molecule id="P56378-2"/>
    <property type="nucleotide sequence ID" value="NM_001127393.2"/>
</dbReference>
<dbReference type="RefSeq" id="NP_004885.1">
    <molecule id="P56378-1"/>
    <property type="nucleotide sequence ID" value="NM_004894.3"/>
</dbReference>
<dbReference type="PDB" id="8H9F">
    <property type="method" value="EM"/>
    <property type="resolution" value="2.69 A"/>
    <property type="chains" value="P=1-58"/>
</dbReference>
<dbReference type="PDB" id="8H9J">
    <property type="method" value="EM"/>
    <property type="resolution" value="3.26 A"/>
    <property type="chains" value="P=1-58"/>
</dbReference>
<dbReference type="PDB" id="8H9M">
    <property type="method" value="EM"/>
    <property type="resolution" value="3.00 A"/>
    <property type="chains" value="P=1-58"/>
</dbReference>
<dbReference type="PDB" id="8H9Q">
    <property type="method" value="EM"/>
    <property type="resolution" value="3.47 A"/>
    <property type="chains" value="P=1-58"/>
</dbReference>
<dbReference type="PDB" id="8H9S">
    <property type="method" value="EM"/>
    <property type="resolution" value="2.53 A"/>
    <property type="chains" value="P=1-58"/>
</dbReference>
<dbReference type="PDB" id="8H9T">
    <property type="method" value="EM"/>
    <property type="resolution" value="2.77 A"/>
    <property type="chains" value="P=1-58"/>
</dbReference>
<dbReference type="PDB" id="8H9U">
    <property type="method" value="EM"/>
    <property type="resolution" value="2.61 A"/>
    <property type="chains" value="P=1-58"/>
</dbReference>
<dbReference type="PDB" id="8H9V">
    <property type="method" value="EM"/>
    <property type="resolution" value="3.02 A"/>
    <property type="chains" value="P=1-58"/>
</dbReference>
<dbReference type="PDB" id="8KHF">
    <property type="method" value="EM"/>
    <property type="resolution" value="3.13 A"/>
    <property type="chains" value="P=1-58"/>
</dbReference>
<dbReference type="PDB" id="8KI3">
    <property type="method" value="EM"/>
    <property type="resolution" value="2.89 A"/>
    <property type="chains" value="P=1-58"/>
</dbReference>
<dbReference type="PDBsum" id="8H9F"/>
<dbReference type="PDBsum" id="8H9J"/>
<dbReference type="PDBsum" id="8H9M"/>
<dbReference type="PDBsum" id="8H9Q"/>
<dbReference type="PDBsum" id="8H9S"/>
<dbReference type="PDBsum" id="8H9T"/>
<dbReference type="PDBsum" id="8H9U"/>
<dbReference type="PDBsum" id="8H9V"/>
<dbReference type="PDBsum" id="8KHF"/>
<dbReference type="PDBsum" id="8KI3"/>
<dbReference type="EMDB" id="EMD-34565"/>
<dbReference type="EMDB" id="EMD-34569"/>
<dbReference type="EMDB" id="EMD-34573"/>
<dbReference type="EMDB" id="EMD-34577"/>
<dbReference type="EMDB" id="EMD-34580"/>
<dbReference type="EMDB" id="EMD-34581"/>
<dbReference type="EMDB" id="EMD-34582"/>
<dbReference type="EMDB" id="EMD-34583"/>
<dbReference type="EMDB" id="EMD-37243"/>
<dbReference type="EMDB" id="EMD-37251"/>
<dbReference type="SMR" id="P56378"/>
<dbReference type="BioGRID" id="114928">
    <property type="interactions" value="34"/>
</dbReference>
<dbReference type="ComplexPortal" id="CPX-6151">
    <property type="entry name" value="Mitochondrial proton-transporting ATP synthase complex"/>
</dbReference>
<dbReference type="FunCoup" id="P56378">
    <property type="interactions" value="177"/>
</dbReference>
<dbReference type="IntAct" id="P56378">
    <property type="interactions" value="10"/>
</dbReference>
<dbReference type="STRING" id="9606.ENSP00000401770"/>
<dbReference type="iPTMnet" id="P56378"/>
<dbReference type="PhosphoSitePlus" id="P56378"/>
<dbReference type="BioMuta" id="C14orf2"/>
<dbReference type="jPOST" id="P56378"/>
<dbReference type="MassIVE" id="P56378"/>
<dbReference type="PaxDb" id="9606-ENSP00000401770"/>
<dbReference type="PeptideAtlas" id="P56378"/>
<dbReference type="ProteomicsDB" id="33590"/>
<dbReference type="ProteomicsDB" id="56916">
    <molecule id="P56378-1"/>
</dbReference>
<dbReference type="Pumba" id="P56378"/>
<dbReference type="TopDownProteomics" id="P56378-1">
    <molecule id="P56378-1"/>
</dbReference>
<dbReference type="Antibodypedia" id="47448">
    <property type="antibodies" value="136 antibodies from 24 providers"/>
</dbReference>
<dbReference type="DNASU" id="9556"/>
<dbReference type="Ensembl" id="ENST00000286953.8">
    <molecule id="P56378-1"/>
    <property type="protein sequence ID" value="ENSP00000286953.4"/>
    <property type="gene ID" value="ENSG00000156411.10"/>
</dbReference>
<dbReference type="Ensembl" id="ENST00000414262.6">
    <molecule id="P56378-2"/>
    <property type="protein sequence ID" value="ENSP00000401770.2"/>
    <property type="gene ID" value="ENSG00000156411.10"/>
</dbReference>
<dbReference type="Ensembl" id="ENST00000554880.5">
    <molecule id="P56378-1"/>
    <property type="protein sequence ID" value="ENSP00000452133.1"/>
    <property type="gene ID" value="ENSG00000156411.10"/>
</dbReference>
<dbReference type="Ensembl" id="ENST00000557040.5">
    <molecule id="P56378-1"/>
    <property type="protein sequence ID" value="ENSP00000450894.1"/>
    <property type="gene ID" value="ENSG00000156411.10"/>
</dbReference>
<dbReference type="GeneID" id="9556"/>
<dbReference type="KEGG" id="hsa:9556"/>
<dbReference type="MANE-Select" id="ENST00000286953.8">
    <property type="protein sequence ID" value="ENSP00000286953.4"/>
    <property type="RefSeq nucleotide sequence ID" value="NM_004894.3"/>
    <property type="RefSeq protein sequence ID" value="NP_004885.1"/>
</dbReference>
<dbReference type="UCSC" id="uc001yoi.5">
    <molecule id="P56378-1"/>
    <property type="organism name" value="human"/>
</dbReference>
<dbReference type="AGR" id="HGNC:1188"/>
<dbReference type="CTD" id="9556"/>
<dbReference type="DisGeNET" id="9556"/>
<dbReference type="GeneCards" id="ATP5MJ"/>
<dbReference type="HGNC" id="HGNC:1188">
    <property type="gene designation" value="ATP5MJ"/>
</dbReference>
<dbReference type="HPA" id="ENSG00000156411">
    <property type="expression patterns" value="Low tissue specificity"/>
</dbReference>
<dbReference type="MIM" id="604573">
    <property type="type" value="gene"/>
</dbReference>
<dbReference type="neXtProt" id="NX_P56378"/>
<dbReference type="OpenTargets" id="ENSG00000156411"/>
<dbReference type="VEuPathDB" id="HostDB:ENSG00000156411"/>
<dbReference type="eggNOG" id="ENOG502SVSA">
    <property type="taxonomic scope" value="Eukaryota"/>
</dbReference>
<dbReference type="GeneTree" id="ENSGT00390000016760"/>
<dbReference type="HOGENOM" id="CLU_198465_0_0_1"/>
<dbReference type="InParanoid" id="P56378"/>
<dbReference type="OMA" id="VWIPMKT"/>
<dbReference type="OrthoDB" id="8767433at2759"/>
<dbReference type="PAN-GO" id="P56378">
    <property type="GO annotations" value="1 GO annotation based on evolutionary models"/>
</dbReference>
<dbReference type="PhylomeDB" id="P56378"/>
<dbReference type="TreeFam" id="TF338412"/>
<dbReference type="PathwayCommons" id="P56378"/>
<dbReference type="Reactome" id="R-HSA-163210">
    <property type="pathway name" value="Formation of ATP by chemiosmotic coupling"/>
</dbReference>
<dbReference type="Reactome" id="R-HSA-8949613">
    <property type="pathway name" value="Cristae formation"/>
</dbReference>
<dbReference type="SignaLink" id="P56378"/>
<dbReference type="BioGRID-ORCS" id="9556">
    <property type="hits" value="62 hits in 1129 CRISPR screens"/>
</dbReference>
<dbReference type="ChiTaRS" id="ATP5MPL">
    <property type="organism name" value="human"/>
</dbReference>
<dbReference type="GenomeRNAi" id="9556"/>
<dbReference type="Pharos" id="P56378">
    <property type="development level" value="Tbio"/>
</dbReference>
<dbReference type="PRO" id="PR:P56378"/>
<dbReference type="Proteomes" id="UP000005640">
    <property type="component" value="Chromosome 14"/>
</dbReference>
<dbReference type="RNAct" id="P56378">
    <property type="molecule type" value="protein"/>
</dbReference>
<dbReference type="Bgee" id="ENSG00000156411">
    <property type="expression patterns" value="Expressed in left ventricle myocardium and 212 other cell types or tissues"/>
</dbReference>
<dbReference type="ExpressionAtlas" id="P56378">
    <property type="expression patterns" value="baseline and differential"/>
</dbReference>
<dbReference type="GO" id="GO:0001650">
    <property type="term" value="C:fibrillar center"/>
    <property type="evidence" value="ECO:0000314"/>
    <property type="project" value="HPA"/>
</dbReference>
<dbReference type="GO" id="GO:0005743">
    <property type="term" value="C:mitochondrial inner membrane"/>
    <property type="evidence" value="ECO:0000304"/>
    <property type="project" value="Reactome"/>
</dbReference>
<dbReference type="GO" id="GO:0005739">
    <property type="term" value="C:mitochondrion"/>
    <property type="evidence" value="ECO:0000314"/>
    <property type="project" value="HPA"/>
</dbReference>
<dbReference type="GO" id="GO:0045259">
    <property type="term" value="C:proton-transporting ATP synthase complex"/>
    <property type="evidence" value="ECO:0000250"/>
    <property type="project" value="UniProtKB"/>
</dbReference>
<dbReference type="GO" id="GO:0015986">
    <property type="term" value="P:proton motive force-driven ATP synthesis"/>
    <property type="evidence" value="ECO:0000303"/>
    <property type="project" value="ComplexPortal"/>
</dbReference>
<dbReference type="InterPro" id="IPR012574">
    <property type="entry name" value="ATP5MJ"/>
</dbReference>
<dbReference type="PANTHER" id="PTHR15233:SF1">
    <property type="entry name" value="ATP SYNTHASE SUBUNIT ATP5MJ, MITOCHONDRIAL"/>
    <property type="match status" value="1"/>
</dbReference>
<dbReference type="PANTHER" id="PTHR15233">
    <property type="entry name" value="MITOCHONDRIAL PROTEOLIPID"/>
    <property type="match status" value="1"/>
</dbReference>
<dbReference type="Pfam" id="PF08039">
    <property type="entry name" value="Mit_proteolip"/>
    <property type="match status" value="1"/>
</dbReference>
<keyword id="KW-0002">3D-structure</keyword>
<keyword id="KW-0025">Alternative splicing</keyword>
<keyword id="KW-0472">Membrane</keyword>
<keyword id="KW-0496">Mitochondrion</keyword>
<keyword id="KW-1267">Proteomics identification</keyword>
<keyword id="KW-1185">Reference proteome</keyword>
<keyword id="KW-0812">Transmembrane</keyword>
<keyword id="KW-1133">Transmembrane helix</keyword>